<protein>
    <recommendedName>
        <fullName>Long-chain-fatty-acid--CoA ligase</fullName>
        <ecNumber evidence="1">6.2.1.3</ecNumber>
    </recommendedName>
    <alternativeName>
        <fullName>Long-chain acyl-CoA synthetase</fullName>
    </alternativeName>
</protein>
<organism>
    <name type="scientific">Haemophilus influenzae (strain ATCC 51907 / DSM 11121 / KW20 / Rd)</name>
    <dbReference type="NCBI Taxonomy" id="71421"/>
    <lineage>
        <taxon>Bacteria</taxon>
        <taxon>Pseudomonadati</taxon>
        <taxon>Pseudomonadota</taxon>
        <taxon>Gammaproteobacteria</taxon>
        <taxon>Pasteurellales</taxon>
        <taxon>Pasteurellaceae</taxon>
        <taxon>Haemophilus</taxon>
    </lineage>
</organism>
<name>LCFA_HAEIN</name>
<comment type="function">
    <text evidence="1">Catalyzes the esterification, concomitant with transport, of exogenous long-chain fatty acids into metabolically active CoA thioesters for subsequent degradation or incorporation into phospholipids.</text>
</comment>
<comment type="catalytic activity">
    <reaction evidence="1">
        <text>a long-chain fatty acid + ATP + CoA = a long-chain fatty acyl-CoA + AMP + diphosphate</text>
        <dbReference type="Rhea" id="RHEA:15421"/>
        <dbReference type="ChEBI" id="CHEBI:30616"/>
        <dbReference type="ChEBI" id="CHEBI:33019"/>
        <dbReference type="ChEBI" id="CHEBI:57287"/>
        <dbReference type="ChEBI" id="CHEBI:57560"/>
        <dbReference type="ChEBI" id="CHEBI:83139"/>
        <dbReference type="ChEBI" id="CHEBI:456215"/>
        <dbReference type="EC" id="6.2.1.3"/>
    </reaction>
</comment>
<comment type="cofactor">
    <cofactor evidence="1">
        <name>Mg(2+)</name>
        <dbReference type="ChEBI" id="CHEBI:18420"/>
    </cofactor>
</comment>
<comment type="pathway">
    <text evidence="1">Lipid metabolism; fatty acid beta-oxidation.</text>
</comment>
<comment type="subcellular location">
    <subcellularLocation>
        <location evidence="2">Membrane</location>
        <topology evidence="2">Peripheral membrane protein</topology>
    </subcellularLocation>
    <text evidence="2">Partially membrane-associated.</text>
</comment>
<comment type="similarity">
    <text evidence="2">Belongs to the ATP-dependent AMP-binding enzyme family.</text>
</comment>
<accession>P46450</accession>
<dbReference type="EC" id="6.2.1.3" evidence="1"/>
<dbReference type="EMBL" id="L42023">
    <property type="protein sequence ID" value="AAC22049.1"/>
    <property type="molecule type" value="Genomic_DNA"/>
</dbReference>
<dbReference type="RefSeq" id="NP_438551.1">
    <property type="nucleotide sequence ID" value="NC_000907.1"/>
</dbReference>
<dbReference type="SMR" id="P46450"/>
<dbReference type="STRING" id="71421.HI_0390.1"/>
<dbReference type="EnsemblBacteria" id="AAC22049">
    <property type="protein sequence ID" value="AAC22049"/>
    <property type="gene ID" value="HI_0390.1"/>
</dbReference>
<dbReference type="KEGG" id="hin:HI_0390.1"/>
<dbReference type="PATRIC" id="fig|71421.8.peg.408"/>
<dbReference type="eggNOG" id="COG0318">
    <property type="taxonomic scope" value="Bacteria"/>
</dbReference>
<dbReference type="HOGENOM" id="CLU_000022_59_9_6"/>
<dbReference type="OrthoDB" id="9803968at2"/>
<dbReference type="PhylomeDB" id="P46450"/>
<dbReference type="BioCyc" id="HINF71421:G1GJ1-405-MONOMER"/>
<dbReference type="UniPathway" id="UPA00659"/>
<dbReference type="Proteomes" id="UP000000579">
    <property type="component" value="Chromosome"/>
</dbReference>
<dbReference type="GO" id="GO:0016020">
    <property type="term" value="C:membrane"/>
    <property type="evidence" value="ECO:0007669"/>
    <property type="project" value="UniProtKB-SubCell"/>
</dbReference>
<dbReference type="GO" id="GO:0005524">
    <property type="term" value="F:ATP binding"/>
    <property type="evidence" value="ECO:0007669"/>
    <property type="project" value="UniProtKB-KW"/>
</dbReference>
<dbReference type="GO" id="GO:0004467">
    <property type="term" value="F:long-chain fatty acid-CoA ligase activity"/>
    <property type="evidence" value="ECO:0007669"/>
    <property type="project" value="UniProtKB-EC"/>
</dbReference>
<dbReference type="GO" id="GO:0006635">
    <property type="term" value="P:fatty acid beta-oxidation"/>
    <property type="evidence" value="ECO:0007669"/>
    <property type="project" value="UniProtKB-UniPathway"/>
</dbReference>
<dbReference type="CDD" id="cd05936">
    <property type="entry name" value="FC-FACS_FadD_like"/>
    <property type="match status" value="1"/>
</dbReference>
<dbReference type="FunFam" id="3.30.300.30:FF:000006">
    <property type="entry name" value="Long-chain-fatty-acid--CoA ligase FadD"/>
    <property type="match status" value="1"/>
</dbReference>
<dbReference type="FunFam" id="3.40.50.12780:FF:000003">
    <property type="entry name" value="Long-chain-fatty-acid--CoA ligase FadD"/>
    <property type="match status" value="1"/>
</dbReference>
<dbReference type="Gene3D" id="3.30.300.30">
    <property type="match status" value="1"/>
</dbReference>
<dbReference type="Gene3D" id="3.40.50.12780">
    <property type="entry name" value="N-terminal domain of ligase-like"/>
    <property type="match status" value="1"/>
</dbReference>
<dbReference type="InterPro" id="IPR025110">
    <property type="entry name" value="AMP-bd_C"/>
</dbReference>
<dbReference type="InterPro" id="IPR045851">
    <property type="entry name" value="AMP-bd_C_sf"/>
</dbReference>
<dbReference type="InterPro" id="IPR020845">
    <property type="entry name" value="AMP-binding_CS"/>
</dbReference>
<dbReference type="InterPro" id="IPR000873">
    <property type="entry name" value="AMP-dep_synth/lig_dom"/>
</dbReference>
<dbReference type="InterPro" id="IPR042099">
    <property type="entry name" value="ANL_N_sf"/>
</dbReference>
<dbReference type="InterPro" id="IPR050237">
    <property type="entry name" value="ATP-dep_AMP-bd_enzyme"/>
</dbReference>
<dbReference type="NCBIfam" id="NF006523">
    <property type="entry name" value="PRK08974.1"/>
    <property type="match status" value="1"/>
</dbReference>
<dbReference type="PANTHER" id="PTHR43767">
    <property type="entry name" value="LONG-CHAIN-FATTY-ACID--COA LIGASE"/>
    <property type="match status" value="1"/>
</dbReference>
<dbReference type="PANTHER" id="PTHR43767:SF8">
    <property type="entry name" value="LONG-CHAIN-FATTY-ACID--COA LIGASE"/>
    <property type="match status" value="1"/>
</dbReference>
<dbReference type="Pfam" id="PF00501">
    <property type="entry name" value="AMP-binding"/>
    <property type="match status" value="1"/>
</dbReference>
<dbReference type="Pfam" id="PF13193">
    <property type="entry name" value="AMP-binding_C"/>
    <property type="match status" value="1"/>
</dbReference>
<dbReference type="SUPFAM" id="SSF56801">
    <property type="entry name" value="Acetyl-CoA synthetase-like"/>
    <property type="match status" value="1"/>
</dbReference>
<dbReference type="PROSITE" id="PS00455">
    <property type="entry name" value="AMP_BINDING"/>
    <property type="match status" value="1"/>
</dbReference>
<evidence type="ECO:0000250" key="1">
    <source>
        <dbReference type="UniProtKB" id="P69451"/>
    </source>
</evidence>
<evidence type="ECO:0000305" key="2"/>
<sequence>MEKIWFQNYPKGSEKFLDTSKYESILDMFDKAVREHPDRPAYINMGQVLTFRKLEERSRAFAAYLQNEFKLQRGDRVALMMPNLLQYPIALFGILRAGLIAVNVNPLYTPRELELQLQDSGAVAIVVVSNFASTLEKVVFNTNVKHVILTRMGDQLSFGKRTLVNFVVKYVKKLVPKYKLPHAVTFREVLSIGKYRQYVRPEISREDLAFLQYTGGTTGVAKGAMLTHGNIITNVFQAKWIAEPFIGDHSRTRSAILALPLYHVFALTVNCLLFLELGVTAILITNPRDIEGFVKELKKYRFEAITGVNTLFNALLNNENFKEVDFSALKLSVGGGMAIQQSVATRWHELTGCNIIEGYGMTECSPLIAACPINVVKHNGTIGVPVPNTDIKIIKDDGSDAKIGEAGELWVKGDQVMRGYWQRPEATSEVLKDGWMATGDIVIMDESYSLRIVDRKKDIILVSGFNVYPNEIEDVVMLNYKVSEAVAIGVPHAVSGETIKIFVVKKDDSLTRDELRNHCRQYLTGYKVPKEIEFRDELPKTNVGKILRRVLRDEEIAKRPKH</sequence>
<keyword id="KW-0067">ATP-binding</keyword>
<keyword id="KW-0276">Fatty acid metabolism</keyword>
<keyword id="KW-0436">Ligase</keyword>
<keyword id="KW-0443">Lipid metabolism</keyword>
<keyword id="KW-0460">Magnesium</keyword>
<keyword id="KW-0472">Membrane</keyword>
<keyword id="KW-0547">Nucleotide-binding</keyword>
<keyword id="KW-1185">Reference proteome</keyword>
<reference key="1">
    <citation type="journal article" date="1995" name="Science">
        <title>Whole-genome random sequencing and assembly of Haemophilus influenzae Rd.</title>
        <authorList>
            <person name="Fleischmann R.D."/>
            <person name="Adams M.D."/>
            <person name="White O."/>
            <person name="Clayton R.A."/>
            <person name="Kirkness E.F."/>
            <person name="Kerlavage A.R."/>
            <person name="Bult C.J."/>
            <person name="Tomb J.-F."/>
            <person name="Dougherty B.A."/>
            <person name="Merrick J.M."/>
            <person name="McKenney K."/>
            <person name="Sutton G.G."/>
            <person name="FitzHugh W."/>
            <person name="Fields C.A."/>
            <person name="Gocayne J.D."/>
            <person name="Scott J.D."/>
            <person name="Shirley R."/>
            <person name="Liu L.-I."/>
            <person name="Glodek A."/>
            <person name="Kelley J.M."/>
            <person name="Weidman J.F."/>
            <person name="Phillips C.A."/>
            <person name="Spriggs T."/>
            <person name="Hedblom E."/>
            <person name="Cotton M.D."/>
            <person name="Utterback T.R."/>
            <person name="Hanna M.C."/>
            <person name="Nguyen D.T."/>
            <person name="Saudek D.M."/>
            <person name="Brandon R.C."/>
            <person name="Fine L.D."/>
            <person name="Fritchman J.L."/>
            <person name="Fuhrmann J.L."/>
            <person name="Geoghagen N.S.M."/>
            <person name="Gnehm C.L."/>
            <person name="McDonald L.A."/>
            <person name="Small K.V."/>
            <person name="Fraser C.M."/>
            <person name="Smith H.O."/>
            <person name="Venter J.C."/>
        </authorList>
    </citation>
    <scope>NUCLEOTIDE SEQUENCE [LARGE SCALE GENOMIC DNA]</scope>
    <source>
        <strain>ATCC 51907 / DSM 11121 / KW20 / Rd</strain>
    </source>
</reference>
<reference key="2">
    <citation type="submission" date="1995-09" db="UniProtKB">
        <authorList>
            <person name="Koonin E.V."/>
            <person name="Rudd K.E."/>
        </authorList>
    </citation>
    <scope>IDENTIFICATION</scope>
</reference>
<feature type="chain" id="PRO_0000193131" description="Long-chain-fatty-acid--CoA ligase">
    <location>
        <begin position="1"/>
        <end position="562"/>
    </location>
</feature>
<proteinExistence type="inferred from homology"/>
<gene>
    <name type="primary">fadD</name>
    <name type="ordered locus">HI_0390.1</name>
</gene>